<dbReference type="EMBL" id="CP000003">
    <property type="protein sequence ID" value="AAT86242.1"/>
    <property type="molecule type" value="Genomic_DNA"/>
</dbReference>
<dbReference type="RefSeq" id="WP_002987748.1">
    <property type="nucleotide sequence ID" value="NC_006086.1"/>
</dbReference>
<dbReference type="SMR" id="Q5XEC1"/>
<dbReference type="GeneID" id="69900040"/>
<dbReference type="KEGG" id="spa:M6_Spy0107"/>
<dbReference type="HOGENOM" id="CLU_098428_0_2_9"/>
<dbReference type="Proteomes" id="UP000001167">
    <property type="component" value="Chromosome"/>
</dbReference>
<dbReference type="GO" id="GO:1990904">
    <property type="term" value="C:ribonucleoprotein complex"/>
    <property type="evidence" value="ECO:0007669"/>
    <property type="project" value="UniProtKB-KW"/>
</dbReference>
<dbReference type="GO" id="GO:0005840">
    <property type="term" value="C:ribosome"/>
    <property type="evidence" value="ECO:0007669"/>
    <property type="project" value="UniProtKB-KW"/>
</dbReference>
<dbReference type="GO" id="GO:0019843">
    <property type="term" value="F:rRNA binding"/>
    <property type="evidence" value="ECO:0007669"/>
    <property type="project" value="UniProtKB-UniRule"/>
</dbReference>
<dbReference type="GO" id="GO:0003735">
    <property type="term" value="F:structural constituent of ribosome"/>
    <property type="evidence" value="ECO:0007669"/>
    <property type="project" value="InterPro"/>
</dbReference>
<dbReference type="GO" id="GO:0006412">
    <property type="term" value="P:translation"/>
    <property type="evidence" value="ECO:0007669"/>
    <property type="project" value="UniProtKB-UniRule"/>
</dbReference>
<dbReference type="FunFam" id="3.30.1370.30:FF:000002">
    <property type="entry name" value="30S ribosomal protein S8"/>
    <property type="match status" value="1"/>
</dbReference>
<dbReference type="FunFam" id="3.30.1490.10:FF:000001">
    <property type="entry name" value="30S ribosomal protein S8"/>
    <property type="match status" value="1"/>
</dbReference>
<dbReference type="Gene3D" id="3.30.1370.30">
    <property type="match status" value="1"/>
</dbReference>
<dbReference type="Gene3D" id="3.30.1490.10">
    <property type="match status" value="1"/>
</dbReference>
<dbReference type="HAMAP" id="MF_01302_B">
    <property type="entry name" value="Ribosomal_uS8_B"/>
    <property type="match status" value="1"/>
</dbReference>
<dbReference type="InterPro" id="IPR000630">
    <property type="entry name" value="Ribosomal_uS8"/>
</dbReference>
<dbReference type="InterPro" id="IPR047863">
    <property type="entry name" value="Ribosomal_uS8_CS"/>
</dbReference>
<dbReference type="InterPro" id="IPR035987">
    <property type="entry name" value="Ribosomal_uS8_sf"/>
</dbReference>
<dbReference type="NCBIfam" id="NF001109">
    <property type="entry name" value="PRK00136.1"/>
    <property type="match status" value="1"/>
</dbReference>
<dbReference type="PANTHER" id="PTHR11758">
    <property type="entry name" value="40S RIBOSOMAL PROTEIN S15A"/>
    <property type="match status" value="1"/>
</dbReference>
<dbReference type="Pfam" id="PF00410">
    <property type="entry name" value="Ribosomal_S8"/>
    <property type="match status" value="1"/>
</dbReference>
<dbReference type="SUPFAM" id="SSF56047">
    <property type="entry name" value="Ribosomal protein S8"/>
    <property type="match status" value="1"/>
</dbReference>
<dbReference type="PROSITE" id="PS00053">
    <property type="entry name" value="RIBOSOMAL_S8"/>
    <property type="match status" value="1"/>
</dbReference>
<protein>
    <recommendedName>
        <fullName evidence="1">Small ribosomal subunit protein uS8</fullName>
    </recommendedName>
    <alternativeName>
        <fullName evidence="2">30S ribosomal protein S8</fullName>
    </alternativeName>
</protein>
<accession>Q5XEC1</accession>
<feature type="chain" id="PRO_0000126500" description="Small ribosomal subunit protein uS8">
    <location>
        <begin position="1"/>
        <end position="132"/>
    </location>
</feature>
<name>RS8_STRP6</name>
<organism>
    <name type="scientific">Streptococcus pyogenes serotype M6 (strain ATCC BAA-946 / MGAS10394)</name>
    <dbReference type="NCBI Taxonomy" id="286636"/>
    <lineage>
        <taxon>Bacteria</taxon>
        <taxon>Bacillati</taxon>
        <taxon>Bacillota</taxon>
        <taxon>Bacilli</taxon>
        <taxon>Lactobacillales</taxon>
        <taxon>Streptococcaceae</taxon>
        <taxon>Streptococcus</taxon>
    </lineage>
</organism>
<evidence type="ECO:0000255" key="1">
    <source>
        <dbReference type="HAMAP-Rule" id="MF_01302"/>
    </source>
</evidence>
<evidence type="ECO:0000305" key="2"/>
<comment type="function">
    <text evidence="1">One of the primary rRNA binding proteins, it binds directly to 16S rRNA central domain where it helps coordinate assembly of the platform of the 30S subunit.</text>
</comment>
<comment type="subunit">
    <text evidence="1">Part of the 30S ribosomal subunit. Contacts proteins S5 and S12.</text>
</comment>
<comment type="similarity">
    <text evidence="1">Belongs to the universal ribosomal protein uS8 family.</text>
</comment>
<keyword id="KW-0687">Ribonucleoprotein</keyword>
<keyword id="KW-0689">Ribosomal protein</keyword>
<keyword id="KW-0694">RNA-binding</keyword>
<keyword id="KW-0699">rRNA-binding</keyword>
<gene>
    <name evidence="1" type="primary">rpsH</name>
    <name type="ordered locus">M6_Spy0107</name>
</gene>
<sequence>MVMTDPIADFLTRIRNANQVKHEVLEVPASNIKKGIAEILKREGFVKNVEVIEDDKQGIIRVFLKYGKNGERVITNLKRISKPGLRVYAKRDDMPKVLNGLGIAIISTSEGLLTDKEARQKNVGGEVIAYVW</sequence>
<reference key="1">
    <citation type="journal article" date="2004" name="J. Infect. Dis.">
        <title>Progress toward characterization of the group A Streptococcus metagenome: complete genome sequence of a macrolide-resistant serotype M6 strain.</title>
        <authorList>
            <person name="Banks D.J."/>
            <person name="Porcella S.F."/>
            <person name="Barbian K.D."/>
            <person name="Beres S.B."/>
            <person name="Philips L.E."/>
            <person name="Voyich J.M."/>
            <person name="DeLeo F.R."/>
            <person name="Martin J.M."/>
            <person name="Somerville G.A."/>
            <person name="Musser J.M."/>
        </authorList>
    </citation>
    <scope>NUCLEOTIDE SEQUENCE [LARGE SCALE GENOMIC DNA]</scope>
    <source>
        <strain>ATCC BAA-946 / MGAS10394</strain>
    </source>
</reference>
<proteinExistence type="inferred from homology"/>